<comment type="function">
    <text evidence="1">This protein binds to the 23S rRNA, and is important in its secondary structure. It is located near the subunit interface in the base of the L7/L12 stalk, and near the tRNA binding site of the peptidyltransferase center.</text>
</comment>
<comment type="subunit">
    <text evidence="1">Part of the 50S ribosomal subunit.</text>
</comment>
<comment type="similarity">
    <text evidence="1">Belongs to the universal ribosomal protein uL6 family.</text>
</comment>
<sequence>MSRIGKLPVSITKGVKVELKDDKVIVSGPKGTLEQKLRPEVTVSVDGNNVVVTRKDDTRPSKEMHGLYRVLINNMVTGVSTGFTKKLELVGVGYKAEIKKDMLVLSLGFSHQIYFKTPAEIKVEVPAPTNISISGSDKELVGQVAAKIRSFRPPEPYQGKGVKYENEVIRRKEGKAAGK</sequence>
<name>RL6_CHLT3</name>
<dbReference type="EMBL" id="CP001100">
    <property type="protein sequence ID" value="ACF13567.1"/>
    <property type="molecule type" value="Genomic_DNA"/>
</dbReference>
<dbReference type="RefSeq" id="WP_012499651.1">
    <property type="nucleotide sequence ID" value="NC_011026.1"/>
</dbReference>
<dbReference type="SMR" id="B3QYD9"/>
<dbReference type="STRING" id="517418.Ctha_1103"/>
<dbReference type="KEGG" id="cts:Ctha_1103"/>
<dbReference type="eggNOG" id="COG0097">
    <property type="taxonomic scope" value="Bacteria"/>
</dbReference>
<dbReference type="HOGENOM" id="CLU_065464_1_2_10"/>
<dbReference type="OrthoDB" id="9805007at2"/>
<dbReference type="Proteomes" id="UP000001208">
    <property type="component" value="Chromosome"/>
</dbReference>
<dbReference type="GO" id="GO:0022625">
    <property type="term" value="C:cytosolic large ribosomal subunit"/>
    <property type="evidence" value="ECO:0007669"/>
    <property type="project" value="TreeGrafter"/>
</dbReference>
<dbReference type="GO" id="GO:0019843">
    <property type="term" value="F:rRNA binding"/>
    <property type="evidence" value="ECO:0007669"/>
    <property type="project" value="UniProtKB-UniRule"/>
</dbReference>
<dbReference type="GO" id="GO:0003735">
    <property type="term" value="F:structural constituent of ribosome"/>
    <property type="evidence" value="ECO:0007669"/>
    <property type="project" value="InterPro"/>
</dbReference>
<dbReference type="GO" id="GO:0002181">
    <property type="term" value="P:cytoplasmic translation"/>
    <property type="evidence" value="ECO:0007669"/>
    <property type="project" value="TreeGrafter"/>
</dbReference>
<dbReference type="FunFam" id="3.90.930.12:FF:000001">
    <property type="entry name" value="50S ribosomal protein L6"/>
    <property type="match status" value="1"/>
</dbReference>
<dbReference type="FunFam" id="3.90.930.12:FF:000002">
    <property type="entry name" value="50S ribosomal protein L6"/>
    <property type="match status" value="1"/>
</dbReference>
<dbReference type="Gene3D" id="3.90.930.12">
    <property type="entry name" value="Ribosomal protein L6, alpha-beta domain"/>
    <property type="match status" value="2"/>
</dbReference>
<dbReference type="HAMAP" id="MF_01365_B">
    <property type="entry name" value="Ribosomal_uL6_B"/>
    <property type="match status" value="1"/>
</dbReference>
<dbReference type="InterPro" id="IPR000702">
    <property type="entry name" value="Ribosomal_uL6-like"/>
</dbReference>
<dbReference type="InterPro" id="IPR036789">
    <property type="entry name" value="Ribosomal_uL6-like_a/b-dom_sf"/>
</dbReference>
<dbReference type="InterPro" id="IPR020040">
    <property type="entry name" value="Ribosomal_uL6_a/b-dom"/>
</dbReference>
<dbReference type="InterPro" id="IPR019906">
    <property type="entry name" value="Ribosomal_uL6_bac-type"/>
</dbReference>
<dbReference type="NCBIfam" id="TIGR03654">
    <property type="entry name" value="L6_bact"/>
    <property type="match status" value="1"/>
</dbReference>
<dbReference type="PANTHER" id="PTHR11655">
    <property type="entry name" value="60S/50S RIBOSOMAL PROTEIN L6/L9"/>
    <property type="match status" value="1"/>
</dbReference>
<dbReference type="PANTHER" id="PTHR11655:SF14">
    <property type="entry name" value="LARGE RIBOSOMAL SUBUNIT PROTEIN UL6M"/>
    <property type="match status" value="1"/>
</dbReference>
<dbReference type="Pfam" id="PF00347">
    <property type="entry name" value="Ribosomal_L6"/>
    <property type="match status" value="2"/>
</dbReference>
<dbReference type="PIRSF" id="PIRSF002162">
    <property type="entry name" value="Ribosomal_L6"/>
    <property type="match status" value="1"/>
</dbReference>
<dbReference type="PRINTS" id="PR00059">
    <property type="entry name" value="RIBOSOMALL6"/>
</dbReference>
<dbReference type="SUPFAM" id="SSF56053">
    <property type="entry name" value="Ribosomal protein L6"/>
    <property type="match status" value="2"/>
</dbReference>
<evidence type="ECO:0000255" key="1">
    <source>
        <dbReference type="HAMAP-Rule" id="MF_01365"/>
    </source>
</evidence>
<evidence type="ECO:0000305" key="2"/>
<feature type="chain" id="PRO_1000143961" description="Large ribosomal subunit protein uL6">
    <location>
        <begin position="1"/>
        <end position="179"/>
    </location>
</feature>
<organism>
    <name type="scientific">Chloroherpeton thalassium (strain ATCC 35110 / GB-78)</name>
    <dbReference type="NCBI Taxonomy" id="517418"/>
    <lineage>
        <taxon>Bacteria</taxon>
        <taxon>Pseudomonadati</taxon>
        <taxon>Chlorobiota</taxon>
        <taxon>Chlorobiia</taxon>
        <taxon>Chlorobiales</taxon>
        <taxon>Chloroherpetonaceae</taxon>
        <taxon>Chloroherpeton</taxon>
    </lineage>
</organism>
<proteinExistence type="inferred from homology"/>
<protein>
    <recommendedName>
        <fullName evidence="1">Large ribosomal subunit protein uL6</fullName>
    </recommendedName>
    <alternativeName>
        <fullName evidence="2">50S ribosomal protein L6</fullName>
    </alternativeName>
</protein>
<accession>B3QYD9</accession>
<reference key="1">
    <citation type="submission" date="2008-06" db="EMBL/GenBank/DDBJ databases">
        <title>Complete sequence of Chloroherpeton thalassium ATCC 35110.</title>
        <authorList>
            <consortium name="US DOE Joint Genome Institute"/>
            <person name="Lucas S."/>
            <person name="Copeland A."/>
            <person name="Lapidus A."/>
            <person name="Glavina del Rio T."/>
            <person name="Dalin E."/>
            <person name="Tice H."/>
            <person name="Bruce D."/>
            <person name="Goodwin L."/>
            <person name="Pitluck S."/>
            <person name="Schmutz J."/>
            <person name="Larimer F."/>
            <person name="Land M."/>
            <person name="Hauser L."/>
            <person name="Kyrpides N."/>
            <person name="Mikhailova N."/>
            <person name="Liu Z."/>
            <person name="Li T."/>
            <person name="Zhao F."/>
            <person name="Overmann J."/>
            <person name="Bryant D.A."/>
            <person name="Richardson P."/>
        </authorList>
    </citation>
    <scope>NUCLEOTIDE SEQUENCE [LARGE SCALE GENOMIC DNA]</scope>
    <source>
        <strain>ATCC 35110 / GB-78</strain>
    </source>
</reference>
<keyword id="KW-1185">Reference proteome</keyword>
<keyword id="KW-0687">Ribonucleoprotein</keyword>
<keyword id="KW-0689">Ribosomal protein</keyword>
<keyword id="KW-0694">RNA-binding</keyword>
<keyword id="KW-0699">rRNA-binding</keyword>
<gene>
    <name evidence="1" type="primary">rplF</name>
    <name type="ordered locus">Ctha_1103</name>
</gene>